<organism>
    <name type="scientific">Mycoplasma capricolum subsp. capricolum (strain California kid / ATCC 27343 / NCTC 10154)</name>
    <dbReference type="NCBI Taxonomy" id="340047"/>
    <lineage>
        <taxon>Bacteria</taxon>
        <taxon>Bacillati</taxon>
        <taxon>Mycoplasmatota</taxon>
        <taxon>Mollicutes</taxon>
        <taxon>Mycoplasmataceae</taxon>
        <taxon>Mycoplasma</taxon>
    </lineage>
</organism>
<name>GATB_MYCCT</name>
<protein>
    <recommendedName>
        <fullName evidence="1">Aspartyl/glutamyl-tRNA(Asn/Gln) amidotransferase subunit B</fullName>
        <shortName evidence="1">Asp/Glu-ADT subunit B</shortName>
        <ecNumber evidence="1">6.3.5.-</ecNumber>
    </recommendedName>
</protein>
<keyword id="KW-0067">ATP-binding</keyword>
<keyword id="KW-0436">Ligase</keyword>
<keyword id="KW-0547">Nucleotide-binding</keyword>
<keyword id="KW-0648">Protein biosynthesis</keyword>
<accession>Q2SRE4</accession>
<sequence>MQNFEIIIGVENHVELKTNSKMFSPSKVSYGEVPNTLANEIDLAYPGTLPSVNKKAVELAVLACNALNMQIDTLLTFDRKNYFYPDLTKGFQITQQFNPIGRNGSLEIALENGNKKVIEIERLHIEEDTAKQVHKDNLTYLDYNRSGVGLIEIVTKPVLRNAEEACLYVEKLREILLFLNVSDVKMNEGSLRTDLNISLRPYGSDKFSNKVEIKNLNSISNIKKAVEFEINRQKEILLKNQIVEQQTRRYDDQTSSTILMRSKIDSIDYRYFREPNIFPIQLEKSWIKNVISNSPELADQKRIRYVNELGLTSEDANIILTSLEMTNFFEKTIKLTSNYNKVAKMLISEIQAKLNLENKTIDQIKLSPENLASVINLIDKNIISSKQTKVIMPIILDSNTETVEQIVERLNLKLITNKNEISKLLVNIINQNKELLEQYPTRPERVIKTIMGQLMKQTNGNVDPEIANQIVIKSIEQNL</sequence>
<evidence type="ECO:0000255" key="1">
    <source>
        <dbReference type="HAMAP-Rule" id="MF_00121"/>
    </source>
</evidence>
<feature type="chain" id="PRO_0000241240" description="Aspartyl/glutamyl-tRNA(Asn/Gln) amidotransferase subunit B">
    <location>
        <begin position="1"/>
        <end position="479"/>
    </location>
</feature>
<reference key="1">
    <citation type="submission" date="2005-09" db="EMBL/GenBank/DDBJ databases">
        <authorList>
            <person name="Glass J.I."/>
            <person name="Lartigue C."/>
            <person name="Pfannkoch C."/>
            <person name="Baden-Tillson H."/>
            <person name="Smith H.O."/>
            <person name="Venter J.C."/>
            <person name="Roske K."/>
            <person name="Wise K.S."/>
            <person name="Calcutt M.J."/>
            <person name="Nelson W.C."/>
            <person name="Nierman W.C."/>
        </authorList>
    </citation>
    <scope>NUCLEOTIDE SEQUENCE [LARGE SCALE GENOMIC DNA]</scope>
    <source>
        <strain>California kid / ATCC 27343 / NCTC 10154</strain>
    </source>
</reference>
<proteinExistence type="inferred from homology"/>
<dbReference type="EC" id="6.3.5.-" evidence="1"/>
<dbReference type="EMBL" id="CP000123">
    <property type="protein sequence ID" value="ABC01589.1"/>
    <property type="molecule type" value="Genomic_DNA"/>
</dbReference>
<dbReference type="RefSeq" id="WP_011387553.1">
    <property type="nucleotide sequence ID" value="NC_007633.1"/>
</dbReference>
<dbReference type="SMR" id="Q2SRE4"/>
<dbReference type="GeneID" id="23778337"/>
<dbReference type="KEGG" id="mcp:MCAP_0709"/>
<dbReference type="HOGENOM" id="CLU_019240_0_0_14"/>
<dbReference type="PhylomeDB" id="Q2SRE4"/>
<dbReference type="Proteomes" id="UP000001928">
    <property type="component" value="Chromosome"/>
</dbReference>
<dbReference type="GO" id="GO:0050566">
    <property type="term" value="F:asparaginyl-tRNA synthase (glutamine-hydrolyzing) activity"/>
    <property type="evidence" value="ECO:0007669"/>
    <property type="project" value="RHEA"/>
</dbReference>
<dbReference type="GO" id="GO:0005524">
    <property type="term" value="F:ATP binding"/>
    <property type="evidence" value="ECO:0007669"/>
    <property type="project" value="UniProtKB-KW"/>
</dbReference>
<dbReference type="GO" id="GO:0050567">
    <property type="term" value="F:glutaminyl-tRNA synthase (glutamine-hydrolyzing) activity"/>
    <property type="evidence" value="ECO:0007669"/>
    <property type="project" value="UniProtKB-UniRule"/>
</dbReference>
<dbReference type="GO" id="GO:0070681">
    <property type="term" value="P:glutaminyl-tRNAGln biosynthesis via transamidation"/>
    <property type="evidence" value="ECO:0007669"/>
    <property type="project" value="TreeGrafter"/>
</dbReference>
<dbReference type="GO" id="GO:0006412">
    <property type="term" value="P:translation"/>
    <property type="evidence" value="ECO:0007669"/>
    <property type="project" value="UniProtKB-UniRule"/>
</dbReference>
<dbReference type="Gene3D" id="1.10.10.410">
    <property type="match status" value="1"/>
</dbReference>
<dbReference type="Gene3D" id="1.10.150.380">
    <property type="entry name" value="GatB domain, N-terminal subdomain"/>
    <property type="match status" value="1"/>
</dbReference>
<dbReference type="HAMAP" id="MF_00121">
    <property type="entry name" value="GatB"/>
    <property type="match status" value="1"/>
</dbReference>
<dbReference type="InterPro" id="IPR017959">
    <property type="entry name" value="Asn/Gln-tRNA_amidoTrfase_suB/E"/>
</dbReference>
<dbReference type="InterPro" id="IPR006075">
    <property type="entry name" value="Asn/Gln-tRNA_Trfase_suB/E_cat"/>
</dbReference>
<dbReference type="InterPro" id="IPR018027">
    <property type="entry name" value="Asn/Gln_amidotransferase"/>
</dbReference>
<dbReference type="InterPro" id="IPR003789">
    <property type="entry name" value="Asn/Gln_tRNA_amidoTrase-B-like"/>
</dbReference>
<dbReference type="InterPro" id="IPR004413">
    <property type="entry name" value="GatB"/>
</dbReference>
<dbReference type="InterPro" id="IPR042114">
    <property type="entry name" value="GatB_C_1"/>
</dbReference>
<dbReference type="InterPro" id="IPR023168">
    <property type="entry name" value="GatB_Yqey_C_2"/>
</dbReference>
<dbReference type="InterPro" id="IPR017958">
    <property type="entry name" value="Gln-tRNA_amidoTrfase_suB_CS"/>
</dbReference>
<dbReference type="InterPro" id="IPR014746">
    <property type="entry name" value="Gln_synth/guanido_kin_cat_dom"/>
</dbReference>
<dbReference type="NCBIfam" id="TIGR00133">
    <property type="entry name" value="gatB"/>
    <property type="match status" value="1"/>
</dbReference>
<dbReference type="NCBIfam" id="NF004012">
    <property type="entry name" value="PRK05477.1-2"/>
    <property type="match status" value="1"/>
</dbReference>
<dbReference type="NCBIfam" id="NF004014">
    <property type="entry name" value="PRK05477.1-4"/>
    <property type="match status" value="1"/>
</dbReference>
<dbReference type="PANTHER" id="PTHR11659">
    <property type="entry name" value="GLUTAMYL-TRNA GLN AMIDOTRANSFERASE SUBUNIT B MITOCHONDRIAL AND PROKARYOTIC PET112-RELATED"/>
    <property type="match status" value="1"/>
</dbReference>
<dbReference type="PANTHER" id="PTHR11659:SF0">
    <property type="entry name" value="GLUTAMYL-TRNA(GLN) AMIDOTRANSFERASE SUBUNIT B, MITOCHONDRIAL"/>
    <property type="match status" value="1"/>
</dbReference>
<dbReference type="Pfam" id="PF02934">
    <property type="entry name" value="GatB_N"/>
    <property type="match status" value="1"/>
</dbReference>
<dbReference type="Pfam" id="PF02637">
    <property type="entry name" value="GatB_Yqey"/>
    <property type="match status" value="1"/>
</dbReference>
<dbReference type="SMART" id="SM00845">
    <property type="entry name" value="GatB_Yqey"/>
    <property type="match status" value="1"/>
</dbReference>
<dbReference type="SUPFAM" id="SSF89095">
    <property type="entry name" value="GatB/YqeY motif"/>
    <property type="match status" value="1"/>
</dbReference>
<dbReference type="SUPFAM" id="SSF55931">
    <property type="entry name" value="Glutamine synthetase/guanido kinase"/>
    <property type="match status" value="1"/>
</dbReference>
<dbReference type="PROSITE" id="PS01234">
    <property type="entry name" value="GATB"/>
    <property type="match status" value="1"/>
</dbReference>
<gene>
    <name evidence="1" type="primary">gatB</name>
    <name type="ordered locus">MCAP_0709</name>
</gene>
<comment type="function">
    <text evidence="1">Allows the formation of correctly charged Asn-tRNA(Asn) or Gln-tRNA(Gln) through the transamidation of misacylated Asp-tRNA(Asn) or Glu-tRNA(Gln) in organisms which lack either or both of asparaginyl-tRNA or glutaminyl-tRNA synthetases. The reaction takes place in the presence of glutamine and ATP through an activated phospho-Asp-tRNA(Asn) or phospho-Glu-tRNA(Gln).</text>
</comment>
<comment type="catalytic activity">
    <reaction evidence="1">
        <text>L-glutamyl-tRNA(Gln) + L-glutamine + ATP + H2O = L-glutaminyl-tRNA(Gln) + L-glutamate + ADP + phosphate + H(+)</text>
        <dbReference type="Rhea" id="RHEA:17521"/>
        <dbReference type="Rhea" id="RHEA-COMP:9681"/>
        <dbReference type="Rhea" id="RHEA-COMP:9684"/>
        <dbReference type="ChEBI" id="CHEBI:15377"/>
        <dbReference type="ChEBI" id="CHEBI:15378"/>
        <dbReference type="ChEBI" id="CHEBI:29985"/>
        <dbReference type="ChEBI" id="CHEBI:30616"/>
        <dbReference type="ChEBI" id="CHEBI:43474"/>
        <dbReference type="ChEBI" id="CHEBI:58359"/>
        <dbReference type="ChEBI" id="CHEBI:78520"/>
        <dbReference type="ChEBI" id="CHEBI:78521"/>
        <dbReference type="ChEBI" id="CHEBI:456216"/>
    </reaction>
</comment>
<comment type="catalytic activity">
    <reaction evidence="1">
        <text>L-aspartyl-tRNA(Asn) + L-glutamine + ATP + H2O = L-asparaginyl-tRNA(Asn) + L-glutamate + ADP + phosphate + 2 H(+)</text>
        <dbReference type="Rhea" id="RHEA:14513"/>
        <dbReference type="Rhea" id="RHEA-COMP:9674"/>
        <dbReference type="Rhea" id="RHEA-COMP:9677"/>
        <dbReference type="ChEBI" id="CHEBI:15377"/>
        <dbReference type="ChEBI" id="CHEBI:15378"/>
        <dbReference type="ChEBI" id="CHEBI:29985"/>
        <dbReference type="ChEBI" id="CHEBI:30616"/>
        <dbReference type="ChEBI" id="CHEBI:43474"/>
        <dbReference type="ChEBI" id="CHEBI:58359"/>
        <dbReference type="ChEBI" id="CHEBI:78515"/>
        <dbReference type="ChEBI" id="CHEBI:78516"/>
        <dbReference type="ChEBI" id="CHEBI:456216"/>
    </reaction>
</comment>
<comment type="subunit">
    <text evidence="1">Heterotrimer of A, B and C subunits.</text>
</comment>
<comment type="similarity">
    <text evidence="1">Belongs to the GatB/GatE family. GatB subfamily.</text>
</comment>